<proteinExistence type="inferred from homology"/>
<comment type="function">
    <text evidence="1">The UvrABC repair system catalyzes the recognition and processing of DNA lesions. UvrA is an ATPase and a DNA-binding protein. A damage recognition complex composed of 2 UvrA and 2 UvrB subunits scans DNA for abnormalities. When the presence of a lesion has been verified by UvrB, the UvrA molecules dissociate.</text>
</comment>
<comment type="subunit">
    <text evidence="1">Forms a heterotetramer with UvrB during the search for lesions.</text>
</comment>
<comment type="subcellular location">
    <subcellularLocation>
        <location evidence="1">Cytoplasm</location>
    </subcellularLocation>
</comment>
<comment type="similarity">
    <text evidence="1">Belongs to the ABC transporter superfamily. UvrA family.</text>
</comment>
<protein>
    <recommendedName>
        <fullName evidence="1">UvrABC system protein A</fullName>
        <shortName evidence="1">UvrA protein</shortName>
    </recommendedName>
    <alternativeName>
        <fullName evidence="1">Excinuclease ABC subunit A</fullName>
    </alternativeName>
</protein>
<gene>
    <name evidence="1" type="primary">uvrA</name>
    <name type="ordered locus">jhp_0644</name>
</gene>
<sequence length="941" mass="104748">MQHKTIMDKIIIQGARENNLKNIFLEIPKNQFVVFTGLSGSGKSTLAFDTLYAEGQRRYLESLSSYARQFLDKVGKPNVDKIEGLTPAIAIDQKTTSKNPRSTVGTITEIYDYLRLLFARVGEQFCPTCLEPISSMSASDIISQICHLEENSKIIILAPIIKDKKGSFNDKLESLRLKGYVRAFVDGVMVRLDEEIHLHKTKKHTIEAVVDRVVINSENASRIASAVEKALKESYGELEVEILQDNAPSIRKHYSEHKACFKCKMSFEELEPLSFSFNSPKGACESCLGLGTKFSLDISKILDPNTPLNQGAIKVIFGYNRSYYAQMFEGFCTYNGIDSALCFNELNKEQQDALLYGNGTEISFHFKNSPLKRPWKGIIQIAYDMFKEQKDLSDYMSEKTCSSCNGHRLKASSLSVQVAGLKMADFLTKPIEEVYHFFNDPTHFNYLNEQEKKIAEPILKEILERVFFLYDVGLGYLTLGRDARTISGGESQRIRIASQIGSGLTGVLYVLDEPSIGLHEKDTLKLINTLRNLQKKGNTLIVVEHDKETIKHADFVVDIGPKAGRHGGEVVFSGSVKDLLQNNHSTALYLNGTKKIERPKFEPPKEKHFLEIKNVNINNIKNLSVQIPLKQLVCITGVSGSGKSSLILQTLLPTAQTLLNHAKKNQSLNGVEIVGLEYLDKVIYLDQAPIGKTPRSNPATYTGVMDEIRILFAEQKEAKILGYSTSRFSFNVKGGRCEKCQGDGDIKIEMHFLPDVLVQCDSCKGAKYNPQTLEIKVKGKSIADVLNMSVEEAYEFFAKFPKIAVKLKTLIDVGLGYITLGQNATTLSGGEAQRIKLAKELSKKDTGKTLYILDEPTTGLHFEDVNHLLQVLHSLVALGNSMLVIEHNLDIIKNADYIIDMGPDGGDKGGKVIASGTPLEVAQNCEKTQSYTGKFLALELK</sequence>
<organism>
    <name type="scientific">Helicobacter pylori (strain J99 / ATCC 700824)</name>
    <name type="common">Campylobacter pylori J99</name>
    <dbReference type="NCBI Taxonomy" id="85963"/>
    <lineage>
        <taxon>Bacteria</taxon>
        <taxon>Pseudomonadati</taxon>
        <taxon>Campylobacterota</taxon>
        <taxon>Epsilonproteobacteria</taxon>
        <taxon>Campylobacterales</taxon>
        <taxon>Helicobacteraceae</taxon>
        <taxon>Helicobacter</taxon>
    </lineage>
</organism>
<keyword id="KW-0067">ATP-binding</keyword>
<keyword id="KW-0963">Cytoplasm</keyword>
<keyword id="KW-0227">DNA damage</keyword>
<keyword id="KW-0228">DNA excision</keyword>
<keyword id="KW-0234">DNA repair</keyword>
<keyword id="KW-0238">DNA-binding</keyword>
<keyword id="KW-0267">Excision nuclease</keyword>
<keyword id="KW-0479">Metal-binding</keyword>
<keyword id="KW-0547">Nucleotide-binding</keyword>
<keyword id="KW-0677">Repeat</keyword>
<keyword id="KW-0742">SOS response</keyword>
<keyword id="KW-0862">Zinc</keyword>
<keyword id="KW-0863">Zinc-finger</keyword>
<evidence type="ECO:0000255" key="1">
    <source>
        <dbReference type="HAMAP-Rule" id="MF_00205"/>
    </source>
</evidence>
<accession>Q9ZLD6</accession>
<dbReference type="EMBL" id="AE001439">
    <property type="protein sequence ID" value="AAD06222.1"/>
    <property type="molecule type" value="Genomic_DNA"/>
</dbReference>
<dbReference type="PIR" id="H71906">
    <property type="entry name" value="H71906"/>
</dbReference>
<dbReference type="RefSeq" id="WP_001164032.1">
    <property type="nucleotide sequence ID" value="NC_000921.1"/>
</dbReference>
<dbReference type="SMR" id="Q9ZLD6"/>
<dbReference type="KEGG" id="hpj:jhp_0644"/>
<dbReference type="eggNOG" id="COG0178">
    <property type="taxonomic scope" value="Bacteria"/>
</dbReference>
<dbReference type="Proteomes" id="UP000000804">
    <property type="component" value="Chromosome"/>
</dbReference>
<dbReference type="GO" id="GO:0005737">
    <property type="term" value="C:cytoplasm"/>
    <property type="evidence" value="ECO:0007669"/>
    <property type="project" value="UniProtKB-SubCell"/>
</dbReference>
<dbReference type="GO" id="GO:0009380">
    <property type="term" value="C:excinuclease repair complex"/>
    <property type="evidence" value="ECO:0007669"/>
    <property type="project" value="InterPro"/>
</dbReference>
<dbReference type="GO" id="GO:0005524">
    <property type="term" value="F:ATP binding"/>
    <property type="evidence" value="ECO:0007669"/>
    <property type="project" value="UniProtKB-UniRule"/>
</dbReference>
<dbReference type="GO" id="GO:0016887">
    <property type="term" value="F:ATP hydrolysis activity"/>
    <property type="evidence" value="ECO:0007669"/>
    <property type="project" value="InterPro"/>
</dbReference>
<dbReference type="GO" id="GO:0003677">
    <property type="term" value="F:DNA binding"/>
    <property type="evidence" value="ECO:0007669"/>
    <property type="project" value="UniProtKB-UniRule"/>
</dbReference>
<dbReference type="GO" id="GO:0009381">
    <property type="term" value="F:excinuclease ABC activity"/>
    <property type="evidence" value="ECO:0007669"/>
    <property type="project" value="UniProtKB-UniRule"/>
</dbReference>
<dbReference type="GO" id="GO:0008270">
    <property type="term" value="F:zinc ion binding"/>
    <property type="evidence" value="ECO:0007669"/>
    <property type="project" value="UniProtKB-UniRule"/>
</dbReference>
<dbReference type="GO" id="GO:0006289">
    <property type="term" value="P:nucleotide-excision repair"/>
    <property type="evidence" value="ECO:0007669"/>
    <property type="project" value="UniProtKB-UniRule"/>
</dbReference>
<dbReference type="GO" id="GO:0009432">
    <property type="term" value="P:SOS response"/>
    <property type="evidence" value="ECO:0007669"/>
    <property type="project" value="UniProtKB-UniRule"/>
</dbReference>
<dbReference type="CDD" id="cd03270">
    <property type="entry name" value="ABC_UvrA_I"/>
    <property type="match status" value="1"/>
</dbReference>
<dbReference type="CDD" id="cd03271">
    <property type="entry name" value="ABC_UvrA_II"/>
    <property type="match status" value="1"/>
</dbReference>
<dbReference type="Gene3D" id="1.10.8.280">
    <property type="entry name" value="ABC transporter ATPase domain-like"/>
    <property type="match status" value="1"/>
</dbReference>
<dbReference type="Gene3D" id="1.20.1580.10">
    <property type="entry name" value="ABC transporter ATPase like domain"/>
    <property type="match status" value="2"/>
</dbReference>
<dbReference type="Gene3D" id="3.30.1490.20">
    <property type="entry name" value="ATP-grasp fold, A domain"/>
    <property type="match status" value="1"/>
</dbReference>
<dbReference type="Gene3D" id="3.40.50.300">
    <property type="entry name" value="P-loop containing nucleotide triphosphate hydrolases"/>
    <property type="match status" value="2"/>
</dbReference>
<dbReference type="HAMAP" id="MF_00205">
    <property type="entry name" value="UvrA"/>
    <property type="match status" value="1"/>
</dbReference>
<dbReference type="InterPro" id="IPR003439">
    <property type="entry name" value="ABC_transporter-like_ATP-bd"/>
</dbReference>
<dbReference type="InterPro" id="IPR017871">
    <property type="entry name" value="ABC_transporter-like_CS"/>
</dbReference>
<dbReference type="InterPro" id="IPR013815">
    <property type="entry name" value="ATP_grasp_subdomain_1"/>
</dbReference>
<dbReference type="InterPro" id="IPR027417">
    <property type="entry name" value="P-loop_NTPase"/>
</dbReference>
<dbReference type="InterPro" id="IPR004602">
    <property type="entry name" value="UvrA"/>
</dbReference>
<dbReference type="InterPro" id="IPR041552">
    <property type="entry name" value="UvrA_DNA-bd"/>
</dbReference>
<dbReference type="InterPro" id="IPR041102">
    <property type="entry name" value="UvrA_inter"/>
</dbReference>
<dbReference type="NCBIfam" id="NF001503">
    <property type="entry name" value="PRK00349.1"/>
    <property type="match status" value="1"/>
</dbReference>
<dbReference type="NCBIfam" id="TIGR00630">
    <property type="entry name" value="uvra"/>
    <property type="match status" value="1"/>
</dbReference>
<dbReference type="PANTHER" id="PTHR43152">
    <property type="entry name" value="UVRABC SYSTEM PROTEIN A"/>
    <property type="match status" value="1"/>
</dbReference>
<dbReference type="PANTHER" id="PTHR43152:SF3">
    <property type="entry name" value="UVRABC SYSTEM PROTEIN A"/>
    <property type="match status" value="1"/>
</dbReference>
<dbReference type="Pfam" id="PF17755">
    <property type="entry name" value="UvrA_DNA-bind"/>
    <property type="match status" value="1"/>
</dbReference>
<dbReference type="Pfam" id="PF17760">
    <property type="entry name" value="UvrA_inter"/>
    <property type="match status" value="1"/>
</dbReference>
<dbReference type="SUPFAM" id="SSF52540">
    <property type="entry name" value="P-loop containing nucleoside triphosphate hydrolases"/>
    <property type="match status" value="2"/>
</dbReference>
<dbReference type="PROSITE" id="PS00211">
    <property type="entry name" value="ABC_TRANSPORTER_1"/>
    <property type="match status" value="2"/>
</dbReference>
<dbReference type="PROSITE" id="PS50893">
    <property type="entry name" value="ABC_TRANSPORTER_2"/>
    <property type="match status" value="1"/>
</dbReference>
<reference key="1">
    <citation type="journal article" date="1999" name="Nature">
        <title>Genomic sequence comparison of two unrelated isolates of the human gastric pathogen Helicobacter pylori.</title>
        <authorList>
            <person name="Alm R.A."/>
            <person name="Ling L.-S.L."/>
            <person name="Moir D.T."/>
            <person name="King B.L."/>
            <person name="Brown E.D."/>
            <person name="Doig P.C."/>
            <person name="Smith D.R."/>
            <person name="Noonan B."/>
            <person name="Guild B.C."/>
            <person name="deJonge B.L."/>
            <person name="Carmel G."/>
            <person name="Tummino P.J."/>
            <person name="Caruso A."/>
            <person name="Uria-Nickelsen M."/>
            <person name="Mills D.M."/>
            <person name="Ives C."/>
            <person name="Gibson R."/>
            <person name="Merberg D."/>
            <person name="Mills S.D."/>
            <person name="Jiang Q."/>
            <person name="Taylor D.E."/>
            <person name="Vovis G.F."/>
            <person name="Trust T.J."/>
        </authorList>
    </citation>
    <scope>NUCLEOTIDE SEQUENCE [LARGE SCALE GENOMIC DNA]</scope>
    <source>
        <strain>J99 / ATCC 700824</strain>
    </source>
</reference>
<name>UVRA_HELPJ</name>
<feature type="chain" id="PRO_0000093055" description="UvrABC system protein A">
    <location>
        <begin position="1"/>
        <end position="941"/>
    </location>
</feature>
<feature type="domain" description="ABC transporter 1" evidence="1">
    <location>
        <begin position="316"/>
        <end position="585"/>
    </location>
</feature>
<feature type="domain" description="ABC transporter 2" evidence="1">
    <location>
        <begin position="605"/>
        <end position="937"/>
    </location>
</feature>
<feature type="zinc finger region" description="C4-type" evidence="1">
    <location>
        <begin position="260"/>
        <end position="287"/>
    </location>
</feature>
<feature type="zinc finger region" description="C4-type" evidence="1">
    <location>
        <begin position="737"/>
        <end position="763"/>
    </location>
</feature>
<feature type="binding site" evidence="1">
    <location>
        <begin position="37"/>
        <end position="44"/>
    </location>
    <ligand>
        <name>ATP</name>
        <dbReference type="ChEBI" id="CHEBI:30616"/>
    </ligand>
</feature>
<feature type="binding site" evidence="1">
    <location>
        <begin position="637"/>
        <end position="644"/>
    </location>
    <ligand>
        <name>ATP</name>
        <dbReference type="ChEBI" id="CHEBI:30616"/>
    </ligand>
</feature>